<keyword id="KW-0010">Activator</keyword>
<keyword id="KW-0221">Differentiation</keyword>
<keyword id="KW-0238">DNA-binding</keyword>
<keyword id="KW-0539">Nucleus</keyword>
<keyword id="KW-1185">Reference proteome</keyword>
<keyword id="KW-0677">Repeat</keyword>
<keyword id="KW-0804">Transcription</keyword>
<keyword id="KW-0805">Transcription regulation</keyword>
<reference key="1">
    <citation type="journal article" date="2016" name="Nature">
        <title>Cloche is a bHLH-PAS transcription factor that drives haemato-vascular specification.</title>
        <authorList>
            <person name="Reischauer S."/>
            <person name="Stone O.A."/>
            <person name="Villasenor A."/>
            <person name="Chi N."/>
            <person name="Jin S.W."/>
            <person name="Martin M."/>
            <person name="Lee M.T."/>
            <person name="Fukuda N."/>
            <person name="Marass M."/>
            <person name="Witty A."/>
            <person name="Fiddes I."/>
            <person name="Kuo T."/>
            <person name="Chung W.S."/>
            <person name="Salek S."/>
            <person name="Lerrigo R."/>
            <person name="Alsioe J."/>
            <person name="Luo S."/>
            <person name="Tworus D."/>
            <person name="Augustine S.M."/>
            <person name="Mucenieks S."/>
            <person name="Nystedt B."/>
            <person name="Giraldez A.J."/>
            <person name="Schroth G.P."/>
            <person name="Andersson O."/>
            <person name="Stainier D.Y."/>
        </authorList>
    </citation>
    <scope>NUCLEOTIDE SEQUENCE [GENOMIC DNA / MRNA]</scope>
    <scope>FUNCTION</scope>
    <scope>DISRUPTION PHENOTYPE</scope>
    <scope>TISSUE SPECIFICITY</scope>
    <scope>DEVELOPMENTAL STAGE</scope>
</reference>
<reference key="2">
    <citation type="journal article" date="2013" name="Nature">
        <title>The zebrafish reference genome sequence and its relationship to the human genome.</title>
        <authorList>
            <person name="Howe K."/>
            <person name="Clark M.D."/>
            <person name="Torroja C.F."/>
            <person name="Torrance J."/>
            <person name="Berthelot C."/>
            <person name="Muffato M."/>
            <person name="Collins J.E."/>
            <person name="Humphray S."/>
            <person name="McLaren K."/>
            <person name="Matthews L."/>
            <person name="McLaren S."/>
            <person name="Sealy I."/>
            <person name="Caccamo M."/>
            <person name="Churcher C."/>
            <person name="Scott C."/>
            <person name="Barrett J.C."/>
            <person name="Koch R."/>
            <person name="Rauch G.J."/>
            <person name="White S."/>
            <person name="Chow W."/>
            <person name="Kilian B."/>
            <person name="Quintais L.T."/>
            <person name="Guerra-Assuncao J.A."/>
            <person name="Zhou Y."/>
            <person name="Gu Y."/>
            <person name="Yen J."/>
            <person name="Vogel J.H."/>
            <person name="Eyre T."/>
            <person name="Redmond S."/>
            <person name="Banerjee R."/>
            <person name="Chi J."/>
            <person name="Fu B."/>
            <person name="Langley E."/>
            <person name="Maguire S.F."/>
            <person name="Laird G.K."/>
            <person name="Lloyd D."/>
            <person name="Kenyon E."/>
            <person name="Donaldson S."/>
            <person name="Sehra H."/>
            <person name="Almeida-King J."/>
            <person name="Loveland J."/>
            <person name="Trevanion S."/>
            <person name="Jones M."/>
            <person name="Quail M."/>
            <person name="Willey D."/>
            <person name="Hunt A."/>
            <person name="Burton J."/>
            <person name="Sims S."/>
            <person name="McLay K."/>
            <person name="Plumb B."/>
            <person name="Davis J."/>
            <person name="Clee C."/>
            <person name="Oliver K."/>
            <person name="Clark R."/>
            <person name="Riddle C."/>
            <person name="Elliot D."/>
            <person name="Threadgold G."/>
            <person name="Harden G."/>
            <person name="Ware D."/>
            <person name="Begum S."/>
            <person name="Mortimore B."/>
            <person name="Kerry G."/>
            <person name="Heath P."/>
            <person name="Phillimore B."/>
            <person name="Tracey A."/>
            <person name="Corby N."/>
            <person name="Dunn M."/>
            <person name="Johnson C."/>
            <person name="Wood J."/>
            <person name="Clark S."/>
            <person name="Pelan S."/>
            <person name="Griffiths G."/>
            <person name="Smith M."/>
            <person name="Glithero R."/>
            <person name="Howden P."/>
            <person name="Barker N."/>
            <person name="Lloyd C."/>
            <person name="Stevens C."/>
            <person name="Harley J."/>
            <person name="Holt K."/>
            <person name="Panagiotidis G."/>
            <person name="Lovell J."/>
            <person name="Beasley H."/>
            <person name="Henderson C."/>
            <person name="Gordon D."/>
            <person name="Auger K."/>
            <person name="Wright D."/>
            <person name="Collins J."/>
            <person name="Raisen C."/>
            <person name="Dyer L."/>
            <person name="Leung K."/>
            <person name="Robertson L."/>
            <person name="Ambridge K."/>
            <person name="Leongamornlert D."/>
            <person name="McGuire S."/>
            <person name="Gilderthorp R."/>
            <person name="Griffiths C."/>
            <person name="Manthravadi D."/>
            <person name="Nichol S."/>
            <person name="Barker G."/>
            <person name="Whitehead S."/>
            <person name="Kay M."/>
            <person name="Brown J."/>
            <person name="Murnane C."/>
            <person name="Gray E."/>
            <person name="Humphries M."/>
            <person name="Sycamore N."/>
            <person name="Barker D."/>
            <person name="Saunders D."/>
            <person name="Wallis J."/>
            <person name="Babbage A."/>
            <person name="Hammond S."/>
            <person name="Mashreghi-Mohammadi M."/>
            <person name="Barr L."/>
            <person name="Martin S."/>
            <person name="Wray P."/>
            <person name="Ellington A."/>
            <person name="Matthews N."/>
            <person name="Ellwood M."/>
            <person name="Woodmansey R."/>
            <person name="Clark G."/>
            <person name="Cooper J."/>
            <person name="Tromans A."/>
            <person name="Grafham D."/>
            <person name="Skuce C."/>
            <person name="Pandian R."/>
            <person name="Andrews R."/>
            <person name="Harrison E."/>
            <person name="Kimberley A."/>
            <person name="Garnett J."/>
            <person name="Fosker N."/>
            <person name="Hall R."/>
            <person name="Garner P."/>
            <person name="Kelly D."/>
            <person name="Bird C."/>
            <person name="Palmer S."/>
            <person name="Gehring I."/>
            <person name="Berger A."/>
            <person name="Dooley C.M."/>
            <person name="Ersan-Urun Z."/>
            <person name="Eser C."/>
            <person name="Geiger H."/>
            <person name="Geisler M."/>
            <person name="Karotki L."/>
            <person name="Kirn A."/>
            <person name="Konantz J."/>
            <person name="Konantz M."/>
            <person name="Oberlander M."/>
            <person name="Rudolph-Geiger S."/>
            <person name="Teucke M."/>
            <person name="Lanz C."/>
            <person name="Raddatz G."/>
            <person name="Osoegawa K."/>
            <person name="Zhu B."/>
            <person name="Rapp A."/>
            <person name="Widaa S."/>
            <person name="Langford C."/>
            <person name="Yang F."/>
            <person name="Schuster S.C."/>
            <person name="Carter N.P."/>
            <person name="Harrow J."/>
            <person name="Ning Z."/>
            <person name="Herrero J."/>
            <person name="Searle S.M."/>
            <person name="Enright A."/>
            <person name="Geisler R."/>
            <person name="Plasterk R.H."/>
            <person name="Lee C."/>
            <person name="Westerfield M."/>
            <person name="de Jong P.J."/>
            <person name="Zon L.I."/>
            <person name="Postlethwait J.H."/>
            <person name="Nusslein-Volhard C."/>
            <person name="Hubbard T.J."/>
            <person name="Roest Crollius H."/>
            <person name="Rogers J."/>
            <person name="Stemple D.L."/>
        </authorList>
    </citation>
    <scope>NUCLEOTIDE SEQUENCE [LARGE SCALE GENOMIC DNA]</scope>
    <source>
        <strain>Tuebingen</strain>
    </source>
</reference>
<reference key="3">
    <citation type="journal article" date="1995" name="Development">
        <title>Cloche, an early acting zebrafish gene, is required by both the endothelial and hematopoietic lineages.</title>
        <authorList>
            <person name="Stainier D.Y."/>
            <person name="Weinstein B.M."/>
            <person name="Detrich H.W. III"/>
            <person name="Zon L.I."/>
            <person name="Fishman M.C."/>
        </authorList>
    </citation>
    <scope>DISRUPTION PHENOTYPE</scope>
</reference>
<organism>
    <name type="scientific">Danio rerio</name>
    <name type="common">Zebrafish</name>
    <name type="synonym">Brachydanio rerio</name>
    <dbReference type="NCBI Taxonomy" id="7955"/>
    <lineage>
        <taxon>Eukaryota</taxon>
        <taxon>Metazoa</taxon>
        <taxon>Chordata</taxon>
        <taxon>Craniata</taxon>
        <taxon>Vertebrata</taxon>
        <taxon>Euteleostomi</taxon>
        <taxon>Actinopterygii</taxon>
        <taxon>Neopterygii</taxon>
        <taxon>Teleostei</taxon>
        <taxon>Ostariophysi</taxon>
        <taxon>Cypriniformes</taxon>
        <taxon>Danionidae</taxon>
        <taxon>Danioninae</taxon>
        <taxon>Danio</taxon>
    </lineage>
</organism>
<name>NPS4L_DANRE</name>
<protein>
    <recommendedName>
        <fullName evidence="6">Neuronal PAS domain-containing protein 4-like</fullName>
    </recommendedName>
    <alternativeName>
        <fullName evidence="6 7">Protein cloche</fullName>
    </alternativeName>
</protein>
<accession>P0DOC7</accession>
<accession>A0A1B0ZA14</accession>
<accession>A0A1B0ZA19</accession>
<dbReference type="EMBL" id="KX066018">
    <property type="protein sequence ID" value="ANP24256.1"/>
    <property type="molecule type" value="Genomic_DNA"/>
</dbReference>
<dbReference type="EMBL" id="KX066019">
    <property type="protein sequence ID" value="ANP24257.1"/>
    <property type="molecule type" value="mRNA"/>
</dbReference>
<dbReference type="EMBL" id="CABZ01080135">
    <property type="status" value="NOT_ANNOTATED_CDS"/>
    <property type="molecule type" value="Genomic_DNA"/>
</dbReference>
<dbReference type="RefSeq" id="NP_001316841.1">
    <property type="nucleotide sequence ID" value="NM_001329912.1"/>
</dbReference>
<dbReference type="SMR" id="P0DOC7"/>
<dbReference type="STRING" id="7955.ENSDARP00000151859"/>
<dbReference type="GeneID" id="108449885"/>
<dbReference type="KEGG" id="dre:108449885"/>
<dbReference type="AGR" id="ZFIN:ZDB-GENE-070117-2515"/>
<dbReference type="CTD" id="108449885"/>
<dbReference type="ZFIN" id="ZDB-GENE-070117-2515">
    <property type="gene designation" value="npas4l"/>
</dbReference>
<dbReference type="InParanoid" id="P0DOC7"/>
<dbReference type="OrthoDB" id="9978016at2759"/>
<dbReference type="PRO" id="PR:P0DOC7"/>
<dbReference type="Proteomes" id="UP000000437">
    <property type="component" value="Chromosome 13"/>
</dbReference>
<dbReference type="GO" id="GO:0005634">
    <property type="term" value="C:nucleus"/>
    <property type="evidence" value="ECO:0007669"/>
    <property type="project" value="UniProtKB-SubCell"/>
</dbReference>
<dbReference type="GO" id="GO:0003700">
    <property type="term" value="F:DNA-binding transcription factor activity"/>
    <property type="evidence" value="ECO:0000315"/>
    <property type="project" value="UniProtKB"/>
</dbReference>
<dbReference type="GO" id="GO:0000981">
    <property type="term" value="F:DNA-binding transcription factor activity, RNA polymerase II-specific"/>
    <property type="evidence" value="ECO:0000318"/>
    <property type="project" value="GO_Central"/>
</dbReference>
<dbReference type="GO" id="GO:0046983">
    <property type="term" value="F:protein dimerization activity"/>
    <property type="evidence" value="ECO:0007669"/>
    <property type="project" value="InterPro"/>
</dbReference>
<dbReference type="GO" id="GO:0000977">
    <property type="term" value="F:RNA polymerase II transcription regulatory region sequence-specific DNA binding"/>
    <property type="evidence" value="ECO:0000318"/>
    <property type="project" value="GO_Central"/>
</dbReference>
<dbReference type="GO" id="GO:0001568">
    <property type="term" value="P:blood vessel development"/>
    <property type="evidence" value="ECO:0000315"/>
    <property type="project" value="ZFIN"/>
</dbReference>
<dbReference type="GO" id="GO:0060216">
    <property type="term" value="P:definitive hemopoiesis"/>
    <property type="evidence" value="ECO:0000315"/>
    <property type="project" value="ZFIN"/>
</dbReference>
<dbReference type="GO" id="GO:0003157">
    <property type="term" value="P:endocardium development"/>
    <property type="evidence" value="ECO:0000315"/>
    <property type="project" value="ZFIN"/>
</dbReference>
<dbReference type="GO" id="GO:0001885">
    <property type="term" value="P:endothelial cell development"/>
    <property type="evidence" value="ECO:0000315"/>
    <property type="project" value="ZFIN"/>
</dbReference>
<dbReference type="GO" id="GO:0045446">
    <property type="term" value="P:endothelial cell differentiation"/>
    <property type="evidence" value="ECO:0000315"/>
    <property type="project" value="UniProtKB"/>
</dbReference>
<dbReference type="GO" id="GO:0007507">
    <property type="term" value="P:heart development"/>
    <property type="evidence" value="ECO:0000315"/>
    <property type="project" value="ZFIN"/>
</dbReference>
<dbReference type="GO" id="GO:0002244">
    <property type="term" value="P:hematopoietic progenitor cell differentiation"/>
    <property type="evidence" value="ECO:0000315"/>
    <property type="project" value="ZFIN"/>
</dbReference>
<dbReference type="GO" id="GO:0060218">
    <property type="term" value="P:hematopoietic stem cell differentiation"/>
    <property type="evidence" value="ECO:0000315"/>
    <property type="project" value="ZFIN"/>
</dbReference>
<dbReference type="GO" id="GO:0030099">
    <property type="term" value="P:myeloid cell differentiation"/>
    <property type="evidence" value="ECO:0000315"/>
    <property type="project" value="ZFIN"/>
</dbReference>
<dbReference type="GO" id="GO:0051892">
    <property type="term" value="P:negative regulation of cardioblast differentiation"/>
    <property type="evidence" value="ECO:0000315"/>
    <property type="project" value="ZFIN"/>
</dbReference>
<dbReference type="GO" id="GO:1902038">
    <property type="term" value="P:positive regulation of hematopoietic stem cell differentiation"/>
    <property type="evidence" value="ECO:0000315"/>
    <property type="project" value="ZFIN"/>
</dbReference>
<dbReference type="GO" id="GO:2000473">
    <property type="term" value="P:positive regulation of hematopoietic stem cell migration"/>
    <property type="evidence" value="ECO:0000315"/>
    <property type="project" value="ZFIN"/>
</dbReference>
<dbReference type="GO" id="GO:0060215">
    <property type="term" value="P:primitive hemopoiesis"/>
    <property type="evidence" value="ECO:0000315"/>
    <property type="project" value="UniProtKB"/>
</dbReference>
<dbReference type="GO" id="GO:0006355">
    <property type="term" value="P:regulation of DNA-templated transcription"/>
    <property type="evidence" value="ECO:0000315"/>
    <property type="project" value="UniProtKB"/>
</dbReference>
<dbReference type="GO" id="GO:0045601">
    <property type="term" value="P:regulation of endothelial cell differentiation"/>
    <property type="evidence" value="ECO:0000315"/>
    <property type="project" value="ZFIN"/>
</dbReference>
<dbReference type="GO" id="GO:0006357">
    <property type="term" value="P:regulation of transcription by RNA polymerase II"/>
    <property type="evidence" value="ECO:0000315"/>
    <property type="project" value="ZFIN"/>
</dbReference>
<dbReference type="GO" id="GO:0001570">
    <property type="term" value="P:vasculogenesis"/>
    <property type="evidence" value="ECO:0000315"/>
    <property type="project" value="ZFIN"/>
</dbReference>
<dbReference type="CDD" id="cd00130">
    <property type="entry name" value="PAS"/>
    <property type="match status" value="2"/>
</dbReference>
<dbReference type="FunFam" id="3.30.450.20:FF:000364">
    <property type="entry name" value="Neuronal PAS domain-containing protein 4-like"/>
    <property type="match status" value="1"/>
</dbReference>
<dbReference type="Gene3D" id="3.30.450.20">
    <property type="entry name" value="PAS domain"/>
    <property type="match status" value="2"/>
</dbReference>
<dbReference type="InterPro" id="IPR011598">
    <property type="entry name" value="bHLH_dom"/>
</dbReference>
<dbReference type="InterPro" id="IPR056192">
    <property type="entry name" value="bHLH_NPAS4"/>
</dbReference>
<dbReference type="InterPro" id="IPR036638">
    <property type="entry name" value="HLH_DNA-bd_sf"/>
</dbReference>
<dbReference type="InterPro" id="IPR000014">
    <property type="entry name" value="PAS"/>
</dbReference>
<dbReference type="InterPro" id="IPR035965">
    <property type="entry name" value="PAS-like_dom_sf"/>
</dbReference>
<dbReference type="NCBIfam" id="TIGR00229">
    <property type="entry name" value="sensory_box"/>
    <property type="match status" value="1"/>
</dbReference>
<dbReference type="PANTHER" id="PTHR23043">
    <property type="entry name" value="HYPOXIA-INDUCIBLE FACTOR 1 ALPHA"/>
    <property type="match status" value="1"/>
</dbReference>
<dbReference type="PANTHER" id="PTHR23043:SF37">
    <property type="entry name" value="NPAS4 PROTEIN"/>
    <property type="match status" value="1"/>
</dbReference>
<dbReference type="Pfam" id="PF23183">
    <property type="entry name" value="bHLH_NPAS4"/>
    <property type="match status" value="1"/>
</dbReference>
<dbReference type="Pfam" id="PF14598">
    <property type="entry name" value="PAS_11"/>
    <property type="match status" value="1"/>
</dbReference>
<dbReference type="SMART" id="SM00091">
    <property type="entry name" value="PAS"/>
    <property type="match status" value="2"/>
</dbReference>
<dbReference type="SUPFAM" id="SSF47459">
    <property type="entry name" value="HLH, helix-loop-helix DNA-binding domain"/>
    <property type="match status" value="1"/>
</dbReference>
<dbReference type="SUPFAM" id="SSF55785">
    <property type="entry name" value="PYP-like sensor domain (PAS domain)"/>
    <property type="match status" value="2"/>
</dbReference>
<dbReference type="PROSITE" id="PS50888">
    <property type="entry name" value="BHLH"/>
    <property type="match status" value="1"/>
</dbReference>
<dbReference type="PROSITE" id="PS50112">
    <property type="entry name" value="PAS"/>
    <property type="match status" value="2"/>
</dbReference>
<sequence>MSCGDSGIRRILRASKRFRSTKGASKARRDQMNSEIRNLRALLPISPEHRLSYLHSMSITCTYIRKSVELRGVCEESTVFSAVNGCVPQDCALQDCALQECVLQECVLQECVLQECVLQALPGFIVAFTTDGKLLYVSENVHEYLGLSMVDVLQSDSFFDMLDRSDVEAVRSVLADASPSGERWVVCRMLVSKAMRLRSSCCPLLVRIRLRDGVCVSLCRPTADRLPARNADFHTHHSADMRLASASSSVLFHLGFSADELIGRSWYELLHPDDLRHAADRHAAILAAATADAEMLIRVQCKDLSWVWMYTHASATAERDAISCSNYMISEAEAVYLQQRLSSSSSSSSSSSSSSASPQCSSVSDSSDAHSAHTLFCTPPYSPTSSQCSDFLSEGYGSLEALVDSAFCSPPYPPLFPNPCCTPTVCPPDTALDPARLCPPDSALVPAALCPPDAALDPTQLCPPGAALDPTLLCPPGAALDPTQLCLPDGALVPAVFCPPNGALVPARLCPSDAALVPAALGRPDAALVPVCRPLQVCECPLDGAVPLEDLSMFPLPQGGGSRLMPPEASPTTHTHFSYDAAQQAGIGTLAMQIHTLICSFDAYSAARHTHSHHTSCWAPEPLLDEGIIDSILRELDSTHTDAHTLI</sequence>
<gene>
    <name evidence="6" type="primary">npas4l</name>
    <name evidence="6 7" type="synonym">clo</name>
</gene>
<evidence type="ECO:0000250" key="1">
    <source>
        <dbReference type="UniProtKB" id="Q8BGD7"/>
    </source>
</evidence>
<evidence type="ECO:0000255" key="2">
    <source>
        <dbReference type="PROSITE-ProRule" id="PRU00140"/>
    </source>
</evidence>
<evidence type="ECO:0000255" key="3">
    <source>
        <dbReference type="PROSITE-ProRule" id="PRU00981"/>
    </source>
</evidence>
<evidence type="ECO:0000269" key="4">
    <source>
    </source>
</evidence>
<evidence type="ECO:0000269" key="5">
    <source>
    </source>
</evidence>
<evidence type="ECO:0000303" key="6">
    <source>
    </source>
</evidence>
<evidence type="ECO:0000303" key="7">
    <source>
    </source>
</evidence>
<evidence type="ECO:0000305" key="8"/>
<proteinExistence type="evidence at transcript level"/>
<comment type="function">
    <text evidence="4">Transcription factor specifically expressed in endothelial and hematopoietic precursor cells that acts as a key regulator of the endothelial differentiation cascade. Acts as an early-response transcription factor that regulates the expression of early regulators of endothelial and haematopoietic differentiation, such as etv2 and tal1.</text>
</comment>
<comment type="subunit">
    <text evidence="1">Heterodimer; efficient DNA binding requires dimerization with another bHLH protein.</text>
</comment>
<comment type="subcellular location">
    <subcellularLocation>
        <location evidence="3">Nucleus</location>
    </subcellularLocation>
</comment>
<comment type="tissue specificity">
    <text evidence="4">Specifically expressed in endothelial and hematopoietic precursor cells (PubMed:27411634).</text>
</comment>
<comment type="developmental stage">
    <text evidence="4">Expression peaks before the end of gastrulation and drops down by 24 hours post-fertilization, when the heart starts beating (PubMed:27411634). Expression precedes that of the earliest endothelial and haematopoietic markers etv2 and tal1 (PubMed:27411634).</text>
</comment>
<comment type="disruption phenotype">
    <text evidence="4 5">Loss of most endothelial and haematopoietic cells and a significant increase in cardiomyocyte numbers (PubMed:27411634, PubMed:7588049). Embryos show defects in the endothelial and hematopoietic lineages at a very early embryonic stage, characterized by the absence of the endocardium (PubMed:27411634). Early cardiac morphogenesis proceeds normally even in the absence of the endocardium (PubMed:27411634). The myocardial cells form a tube that is demarcated into chambers, beats rhythmically, but exhibits a reduced contractility (PubMed:27411634). Mutant embryos survive for one week of development (PubMed:27411634).</text>
</comment>
<comment type="miscellaneous">
    <text evidence="7">Was named 'cloche', which means 'bell' in French, because of the bell-shaped heart in mutant embryos.</text>
</comment>
<feature type="chain" id="PRO_0000438134" description="Neuronal PAS domain-containing protein 4-like">
    <location>
        <begin position="1"/>
        <end position="647"/>
    </location>
</feature>
<feature type="domain" description="bHLH" evidence="3">
    <location>
        <begin position="16"/>
        <end position="67"/>
    </location>
</feature>
<feature type="domain" description="PAS 1" evidence="2">
    <location>
        <begin position="117"/>
        <end position="181"/>
    </location>
</feature>
<feature type="domain" description="PAS 2" evidence="2">
    <location>
        <begin position="238"/>
        <end position="274"/>
    </location>
</feature>
<feature type="region of interest" description="Basic motif; degenerate" evidence="3">
    <location>
        <begin position="16"/>
        <end position="29"/>
    </location>
</feature>
<feature type="region of interest" description="Helix-loop-helix motif" evidence="3">
    <location>
        <begin position="30"/>
        <end position="67"/>
    </location>
</feature>
<feature type="sequence conflict" description="In Ref. 1; ANP24257." evidence="8" ref="1">
    <original>S</original>
    <variation>T</variation>
    <location>
        <position position="349"/>
    </location>
</feature>